<sequence>HEHSSDESSESSKPCCDLCTCTKSIPPQCHCNDMRLNSCHSACKSCICALSEPAQCFCVDTTDFCYKSCHNNAEKD</sequence>
<protein>
    <recommendedName>
        <fullName>Bowman-Birk type proteinase inhibitor DE-4</fullName>
    </recommendedName>
</protein>
<reference key="1">
    <citation type="journal article" date="1979" name="Eur. J. Biochem.">
        <title>Purification, some properties and the complete primary structures of two protease inhibitors (DE-3 and DE-4) from Macrotyloma axillare seed.</title>
        <authorList>
            <person name="Joubert F.J."/>
            <person name="Kruger H."/>
            <person name="Townshend G.S."/>
            <person name="Botes D.P."/>
        </authorList>
    </citation>
    <scope>PROTEIN SEQUENCE</scope>
</reference>
<reference key="2">
    <citation type="journal article" date="2002" name="Biochemistry">
        <title>A conserved cis peptide bond is necessary for the activity of Bowman-Birk inhibitor protein.</title>
        <authorList>
            <person name="Brauer A.B."/>
            <person name="Domingo G.J."/>
            <person name="Cooke R.M."/>
            <person name="Matthews S.J."/>
            <person name="Leatherbarrow R.J."/>
        </authorList>
    </citation>
    <scope>STRUCTURE BY NMR OF 21-29</scope>
    <scope>DISULFIDE BOND</scope>
</reference>
<proteinExistence type="evidence at protein level"/>
<dbReference type="PIR" id="A01298">
    <property type="entry name" value="TIAM4"/>
</dbReference>
<dbReference type="PDB" id="1GM2">
    <property type="method" value="NMR"/>
    <property type="chains" value="A=21-29"/>
</dbReference>
<dbReference type="PDBsum" id="1GM2"/>
<dbReference type="SMR" id="P01059"/>
<dbReference type="MEROPS" id="I12.001"/>
<dbReference type="EvolutionaryTrace" id="P01059"/>
<dbReference type="GO" id="GO:0005576">
    <property type="term" value="C:extracellular region"/>
    <property type="evidence" value="ECO:0007669"/>
    <property type="project" value="InterPro"/>
</dbReference>
<dbReference type="GO" id="GO:0004867">
    <property type="term" value="F:serine-type endopeptidase inhibitor activity"/>
    <property type="evidence" value="ECO:0007669"/>
    <property type="project" value="UniProtKB-KW"/>
</dbReference>
<dbReference type="CDD" id="cd00023">
    <property type="entry name" value="BBI"/>
    <property type="match status" value="1"/>
</dbReference>
<dbReference type="FunFam" id="2.10.69.10:FF:000001">
    <property type="entry name" value="Bowman-Birk type proteinase inhibitor"/>
    <property type="match status" value="1"/>
</dbReference>
<dbReference type="Gene3D" id="2.10.69.10">
    <property type="entry name" value="Cysteine Protease (Bromelain) Inhibitor, subunit H"/>
    <property type="match status" value="1"/>
</dbReference>
<dbReference type="InterPro" id="IPR035995">
    <property type="entry name" value="Bowman-Birk_prot_inh"/>
</dbReference>
<dbReference type="InterPro" id="IPR000877">
    <property type="entry name" value="Prot_inh_BBI"/>
</dbReference>
<dbReference type="Pfam" id="PF00228">
    <property type="entry name" value="Bowman-Birk_leg"/>
    <property type="match status" value="2"/>
</dbReference>
<dbReference type="SMART" id="SM00269">
    <property type="entry name" value="BowB"/>
    <property type="match status" value="1"/>
</dbReference>
<dbReference type="SUPFAM" id="SSF57247">
    <property type="entry name" value="Bowman-Birk inhibitor, BBI"/>
    <property type="match status" value="1"/>
</dbReference>
<dbReference type="PROSITE" id="PS00281">
    <property type="entry name" value="BOWMAN_BIRK"/>
    <property type="match status" value="1"/>
</dbReference>
<evidence type="ECO:0000250" key="1"/>
<evidence type="ECO:0000250" key="2">
    <source>
        <dbReference type="UniProtKB" id="P80321"/>
    </source>
</evidence>
<evidence type="ECO:0000269" key="3">
    <source>
    </source>
</evidence>
<evidence type="ECO:0000305" key="4"/>
<accession>P01059</accession>
<keyword id="KW-0002">3D-structure</keyword>
<keyword id="KW-0903">Direct protein sequencing</keyword>
<keyword id="KW-1015">Disulfide bond</keyword>
<keyword id="KW-0646">Protease inhibitor</keyword>
<keyword id="KW-0722">Serine protease inhibitor</keyword>
<name>IBB4_MACAX</name>
<organism>
    <name type="scientific">Macrotyloma axillare</name>
    <name type="common">Perennial horse gram</name>
    <name type="synonym">Dolichos axillaris</name>
    <dbReference type="NCBI Taxonomy" id="3876"/>
    <lineage>
        <taxon>Eukaryota</taxon>
        <taxon>Viridiplantae</taxon>
        <taxon>Streptophyta</taxon>
        <taxon>Embryophyta</taxon>
        <taxon>Tracheophyta</taxon>
        <taxon>Spermatophyta</taxon>
        <taxon>Magnoliopsida</taxon>
        <taxon>eudicotyledons</taxon>
        <taxon>Gunneridae</taxon>
        <taxon>Pentapetalae</taxon>
        <taxon>rosids</taxon>
        <taxon>fabids</taxon>
        <taxon>Fabales</taxon>
        <taxon>Fabaceae</taxon>
        <taxon>Papilionoideae</taxon>
        <taxon>50 kb inversion clade</taxon>
        <taxon>NPAAA clade</taxon>
        <taxon>indigoferoid/millettioid clade</taxon>
        <taxon>Phaseoleae</taxon>
        <taxon>Macrotyloma</taxon>
    </lineage>
</organism>
<feature type="chain" id="PRO_0000105842" description="Bowman-Birk type proteinase inhibitor DE-4">
    <location>
        <begin position="1"/>
        <end position="76"/>
    </location>
</feature>
<feature type="site" description="Reactive bond for trypsin" evidence="1">
    <location>
        <begin position="23"/>
        <end position="24"/>
    </location>
</feature>
<feature type="site" description="Reactive bond for chymotrypsin" evidence="1">
    <location>
        <begin position="50"/>
        <end position="51"/>
    </location>
</feature>
<feature type="disulfide bond" evidence="2">
    <location>
        <begin position="15"/>
        <end position="69"/>
    </location>
</feature>
<feature type="disulfide bond" evidence="2">
    <location>
        <begin position="16"/>
        <end position="31"/>
    </location>
</feature>
<feature type="disulfide bond" evidence="2">
    <location>
        <begin position="19"/>
        <end position="65"/>
    </location>
</feature>
<feature type="disulfide bond" evidence="3">
    <location>
        <begin position="21"/>
        <end position="29"/>
    </location>
</feature>
<feature type="disulfide bond" evidence="2">
    <location>
        <begin position="39"/>
        <end position="46"/>
    </location>
</feature>
<feature type="disulfide bond" evidence="2">
    <location>
        <begin position="43"/>
        <end position="58"/>
    </location>
</feature>
<feature type="disulfide bond" evidence="2">
    <location>
        <begin position="48"/>
        <end position="56"/>
    </location>
</feature>
<comment type="similarity">
    <text evidence="4">Belongs to the Bowman-Birk serine protease inhibitor family.</text>
</comment>